<dbReference type="EMBL" id="CP009817">
    <property type="protein sequence ID" value="ATZ56591.1"/>
    <property type="molecule type" value="Genomic_DNA"/>
</dbReference>
<dbReference type="SMR" id="A6SJ85"/>
<dbReference type="EnsemblFungi" id="Bcin13g04280.1">
    <property type="protein sequence ID" value="Bcin13p04280.1"/>
    <property type="gene ID" value="Bcin13g04280"/>
</dbReference>
<dbReference type="VEuPathDB" id="FungiDB:Bcin13g04280"/>
<dbReference type="OrthoDB" id="1667587at2759"/>
<dbReference type="Proteomes" id="UP000001798">
    <property type="component" value="Chromosome bcin13"/>
</dbReference>
<dbReference type="GO" id="GO:0010008">
    <property type="term" value="C:endosome membrane"/>
    <property type="evidence" value="ECO:0007669"/>
    <property type="project" value="UniProtKB-SubCell"/>
</dbReference>
<dbReference type="GO" id="GO:0034045">
    <property type="term" value="C:phagophore assembly site membrane"/>
    <property type="evidence" value="ECO:0007669"/>
    <property type="project" value="UniProtKB-SubCell"/>
</dbReference>
<dbReference type="GO" id="GO:0005774">
    <property type="term" value="C:vacuolar membrane"/>
    <property type="evidence" value="ECO:0007669"/>
    <property type="project" value="UniProtKB-SubCell"/>
</dbReference>
<dbReference type="GO" id="GO:0006914">
    <property type="term" value="P:autophagy"/>
    <property type="evidence" value="ECO:0007669"/>
    <property type="project" value="UniProtKB-KW"/>
</dbReference>
<dbReference type="GO" id="GO:0015031">
    <property type="term" value="P:protein transport"/>
    <property type="evidence" value="ECO:0007669"/>
    <property type="project" value="UniProtKB-KW"/>
</dbReference>
<dbReference type="FunFam" id="2.130.10.10:FF:001251">
    <property type="entry name" value="Autophagy-related protein 18"/>
    <property type="match status" value="1"/>
</dbReference>
<dbReference type="Gene3D" id="2.130.10.10">
    <property type="entry name" value="YVTN repeat-like/Quinoprotein amine dehydrogenase"/>
    <property type="match status" value="1"/>
</dbReference>
<dbReference type="InterPro" id="IPR048720">
    <property type="entry name" value="PROPPIN"/>
</dbReference>
<dbReference type="InterPro" id="IPR015943">
    <property type="entry name" value="WD40/YVTN_repeat-like_dom_sf"/>
</dbReference>
<dbReference type="InterPro" id="IPR036322">
    <property type="entry name" value="WD40_repeat_dom_sf"/>
</dbReference>
<dbReference type="InterPro" id="IPR001680">
    <property type="entry name" value="WD40_rpt"/>
</dbReference>
<dbReference type="PANTHER" id="PTHR11227">
    <property type="entry name" value="WD-REPEAT PROTEIN INTERACTING WITH PHOSPHOINOSIDES WIPI -RELATED"/>
    <property type="match status" value="1"/>
</dbReference>
<dbReference type="Pfam" id="PF21032">
    <property type="entry name" value="PROPPIN"/>
    <property type="match status" value="2"/>
</dbReference>
<dbReference type="SMART" id="SM00320">
    <property type="entry name" value="WD40"/>
    <property type="match status" value="2"/>
</dbReference>
<dbReference type="SUPFAM" id="SSF50978">
    <property type="entry name" value="WD40 repeat-like"/>
    <property type="match status" value="1"/>
</dbReference>
<reference key="1">
    <citation type="journal article" date="2011" name="PLoS Genet.">
        <title>Genomic analysis of the necrotrophic fungal pathogens Sclerotinia sclerotiorum and Botrytis cinerea.</title>
        <authorList>
            <person name="Amselem J."/>
            <person name="Cuomo C.A."/>
            <person name="van Kan J.A.L."/>
            <person name="Viaud M."/>
            <person name="Benito E.P."/>
            <person name="Couloux A."/>
            <person name="Coutinho P.M."/>
            <person name="de Vries R.P."/>
            <person name="Dyer P.S."/>
            <person name="Fillinger S."/>
            <person name="Fournier E."/>
            <person name="Gout L."/>
            <person name="Hahn M."/>
            <person name="Kohn L."/>
            <person name="Lapalu N."/>
            <person name="Plummer K.M."/>
            <person name="Pradier J.-M."/>
            <person name="Quevillon E."/>
            <person name="Sharon A."/>
            <person name="Simon A."/>
            <person name="ten Have A."/>
            <person name="Tudzynski B."/>
            <person name="Tudzynski P."/>
            <person name="Wincker P."/>
            <person name="Andrew M."/>
            <person name="Anthouard V."/>
            <person name="Beever R.E."/>
            <person name="Beffa R."/>
            <person name="Benoit I."/>
            <person name="Bouzid O."/>
            <person name="Brault B."/>
            <person name="Chen Z."/>
            <person name="Choquer M."/>
            <person name="Collemare J."/>
            <person name="Cotton P."/>
            <person name="Danchin E.G."/>
            <person name="Da Silva C."/>
            <person name="Gautier A."/>
            <person name="Giraud C."/>
            <person name="Giraud T."/>
            <person name="Gonzalez C."/>
            <person name="Grossetete S."/>
            <person name="Gueldener U."/>
            <person name="Henrissat B."/>
            <person name="Howlett B.J."/>
            <person name="Kodira C."/>
            <person name="Kretschmer M."/>
            <person name="Lappartient A."/>
            <person name="Leroch M."/>
            <person name="Levis C."/>
            <person name="Mauceli E."/>
            <person name="Neuveglise C."/>
            <person name="Oeser B."/>
            <person name="Pearson M."/>
            <person name="Poulain J."/>
            <person name="Poussereau N."/>
            <person name="Quesneville H."/>
            <person name="Rascle C."/>
            <person name="Schumacher J."/>
            <person name="Segurens B."/>
            <person name="Sexton A."/>
            <person name="Silva E."/>
            <person name="Sirven C."/>
            <person name="Soanes D.M."/>
            <person name="Talbot N.J."/>
            <person name="Templeton M."/>
            <person name="Yandava C."/>
            <person name="Yarden O."/>
            <person name="Zeng Q."/>
            <person name="Rollins J.A."/>
            <person name="Lebrun M.-H."/>
            <person name="Dickman M."/>
        </authorList>
    </citation>
    <scope>NUCLEOTIDE SEQUENCE [LARGE SCALE GENOMIC DNA]</scope>
    <source>
        <strain>B05.10</strain>
    </source>
</reference>
<reference key="2">
    <citation type="journal article" date="2012" name="Eukaryot. Cell">
        <title>Genome update of Botrytis cinerea strains B05.10 and T4.</title>
        <authorList>
            <person name="Staats M."/>
            <person name="van Kan J.A.L."/>
        </authorList>
    </citation>
    <scope>NUCLEOTIDE SEQUENCE [LARGE SCALE GENOMIC DNA]</scope>
    <scope>GENOME REANNOTATION</scope>
    <source>
        <strain>B05.10</strain>
    </source>
</reference>
<reference key="3">
    <citation type="journal article" date="2017" name="Mol. Plant Pathol.">
        <title>A gapless genome sequence of the fungus Botrytis cinerea.</title>
        <authorList>
            <person name="van Kan J.A.L."/>
            <person name="Stassen J.H.M."/>
            <person name="Mosbach A."/>
            <person name="van der Lee T.A.J."/>
            <person name="Faino L."/>
            <person name="Farmer A.D."/>
            <person name="Papasotiriou D.G."/>
            <person name="Zhou S."/>
            <person name="Seidl M.F."/>
            <person name="Cottam E."/>
            <person name="Edel D."/>
            <person name="Hahn M."/>
            <person name="Schwartz D.C."/>
            <person name="Dietrich R.A."/>
            <person name="Widdison S."/>
            <person name="Scalliet G."/>
        </authorList>
    </citation>
    <scope>NUCLEOTIDE SEQUENCE [LARGE SCALE GENOMIC DNA]</scope>
    <scope>GENOME REANNOTATION</scope>
    <source>
        <strain>B05.10</strain>
    </source>
</reference>
<name>ATG18_BOTFB</name>
<keyword id="KW-0072">Autophagy</keyword>
<keyword id="KW-0967">Endosome</keyword>
<keyword id="KW-0472">Membrane</keyword>
<keyword id="KW-0653">Protein transport</keyword>
<keyword id="KW-1185">Reference proteome</keyword>
<keyword id="KW-0677">Repeat</keyword>
<keyword id="KW-0813">Transport</keyword>
<keyword id="KW-0926">Vacuole</keyword>
<keyword id="KW-0853">WD repeat</keyword>
<organism>
    <name type="scientific">Botryotinia fuckeliana (strain B05.10)</name>
    <name type="common">Noble rot fungus</name>
    <name type="synonym">Botrytis cinerea</name>
    <dbReference type="NCBI Taxonomy" id="332648"/>
    <lineage>
        <taxon>Eukaryota</taxon>
        <taxon>Fungi</taxon>
        <taxon>Dikarya</taxon>
        <taxon>Ascomycota</taxon>
        <taxon>Pezizomycotina</taxon>
        <taxon>Leotiomycetes</taxon>
        <taxon>Helotiales</taxon>
        <taxon>Sclerotiniaceae</taxon>
        <taxon>Botrytis</taxon>
    </lineage>
</organism>
<evidence type="ECO:0000250" key="1"/>
<evidence type="ECO:0000250" key="2">
    <source>
        <dbReference type="UniProtKB" id="P43601"/>
    </source>
</evidence>
<evidence type="ECO:0000256" key="3">
    <source>
        <dbReference type="SAM" id="MobiDB-lite"/>
    </source>
</evidence>
<evidence type="ECO:0000305" key="4"/>
<comment type="function">
    <text evidence="1">The PI(3,5)P2 regulatory complex regulates both the synthesis and turnover of phosphatidylinositol 3,5-bisphosphate (PtdIns(3,5)P2). Necessary for proper vacuole morphology. Plays an important role in osmotically-induced vacuole fragmentation. Required for cytoplasm to vacuole transport (Cvt) vesicle formation, pexophagy and starvation-induced autophagy. Involved in correct atg9 trafficking to the pre-autophagosomal structure. Might also be involved in premeiotic DNA replication (By similarity).</text>
</comment>
<comment type="subunit">
    <text evidence="1">Component of the PI(3,5)P2 regulatory complex.</text>
</comment>
<comment type="subcellular location">
    <subcellularLocation>
        <location evidence="1">Preautophagosomal structure membrane</location>
        <topology evidence="1">Peripheral membrane protein</topology>
    </subcellularLocation>
    <subcellularLocation>
        <location evidence="1">Vacuole membrane</location>
        <topology evidence="1">Peripheral membrane protein</topology>
    </subcellularLocation>
    <subcellularLocation>
        <location evidence="1">Endosome membrane</location>
        <topology evidence="1">Peripheral membrane protein</topology>
    </subcellularLocation>
</comment>
<comment type="domain">
    <text evidence="1">The N-terminus might form a beta-propeller domain involved in specific binding to phosphatidylinositol 3,5-bisphosphate (PIP2), leading to the association of the protein to the membrane.</text>
</comment>
<comment type="domain">
    <text evidence="2">The L/FRRG motif is essential for the cytoplasm to vacuole transport (Cvt) pathway, for the recruitment of atg8 and atg16 to the PAS in nutrient-rich medium, and for its recruitment to and dissociation from the PAS under starvation conditions.</text>
</comment>
<comment type="similarity">
    <text evidence="4">Belongs to the WD repeat PROPPIN family.</text>
</comment>
<feature type="chain" id="PRO_0000317999" description="Autophagy-related protein 18">
    <location>
        <begin position="1"/>
        <end position="434"/>
    </location>
</feature>
<feature type="repeat" description="WD 1">
    <location>
        <begin position="1"/>
        <end position="34"/>
    </location>
</feature>
<feature type="repeat" description="WD 2">
    <location>
        <begin position="183"/>
        <end position="223"/>
    </location>
</feature>
<feature type="repeat" description="WD 3">
    <location>
        <begin position="228"/>
        <end position="267"/>
    </location>
</feature>
<feature type="repeat" description="WD 4">
    <location>
        <begin position="367"/>
        <end position="407"/>
    </location>
</feature>
<feature type="region of interest" description="Disordered" evidence="3">
    <location>
        <begin position="262"/>
        <end position="318"/>
    </location>
</feature>
<feature type="short sequence motif" description="L/FRRG motif" evidence="2">
    <location>
        <begin position="224"/>
        <end position="228"/>
    </location>
</feature>
<feature type="compositionally biased region" description="Basic and acidic residues" evidence="3">
    <location>
        <begin position="274"/>
        <end position="286"/>
    </location>
</feature>
<accession>A6SJ85</accession>
<accession>A0A384K1D8</accession>
<protein>
    <recommendedName>
        <fullName>Autophagy-related protein 18</fullName>
    </recommendedName>
</protein>
<sequence length="434" mass="46985">MNYVTFNQDYSCLAVGTAKGFRIYHTEPFSKIFTGDNENVTIIEMLFSTSLVAIKQSPRHIVIQNTKRGTVICELTFPSAVLAVRLNRKRFAVLLEEEIYLYDIQNMGLLYTISTSANPNAICSLSASSDNCYLAYPLPKPREETGDKRPAHAPPLSPYVAPTSGEVLIFDAKSLKAVNVIEAHRAPLSCIALNNDGTLLATASETGTIIRVFSVPDGQKLYQFRRGTYPSSIFSLSFNMSSTLLCVSSNSDTIHIFRLGGPVTGLPESPQSPGDKDKWRRSRSFDSENGSPPAGISPGSEMADVPAEKSKSSGTFGSMIRRSSQMVGKGVAGVVGGYLPQAVTEMWEPARDFAFIKLPKGGMGVTPRSGPVKSVVAMSSSSPQVMVVTSDGGFYIYSIDMETGGEGVLVKQYSVLESDDSLEPPPINYVSYRT</sequence>
<gene>
    <name type="primary">atg18</name>
    <name type="ORF">BC1G_12821</name>
    <name type="ORF">BCIN_13g04280</name>
</gene>
<proteinExistence type="inferred from homology"/>